<dbReference type="EC" id="3.5.1.5" evidence="1"/>
<dbReference type="EMBL" id="AY363686">
    <property type="protein sequence ID" value="AAR15135.1"/>
    <property type="molecule type" value="Genomic_DNA"/>
</dbReference>
<dbReference type="RefSeq" id="WP_032816446.1">
    <property type="nucleotide sequence ID" value="NZ_CTKU01000009.1"/>
</dbReference>
<dbReference type="SMR" id="Q6UR35"/>
<dbReference type="STRING" id="29485.CH64_1584"/>
<dbReference type="OrthoDB" id="9797217at2"/>
<dbReference type="UniPathway" id="UPA00258">
    <property type="reaction ID" value="UER00370"/>
</dbReference>
<dbReference type="GO" id="GO:0005737">
    <property type="term" value="C:cytoplasm"/>
    <property type="evidence" value="ECO:0007669"/>
    <property type="project" value="UniProtKB-SubCell"/>
</dbReference>
<dbReference type="GO" id="GO:0016151">
    <property type="term" value="F:nickel cation binding"/>
    <property type="evidence" value="ECO:0007669"/>
    <property type="project" value="InterPro"/>
</dbReference>
<dbReference type="GO" id="GO:0009039">
    <property type="term" value="F:urease activity"/>
    <property type="evidence" value="ECO:0007669"/>
    <property type="project" value="UniProtKB-UniRule"/>
</dbReference>
<dbReference type="GO" id="GO:0043419">
    <property type="term" value="P:urea catabolic process"/>
    <property type="evidence" value="ECO:0007669"/>
    <property type="project" value="UniProtKB-UniRule"/>
</dbReference>
<dbReference type="CDD" id="cd00390">
    <property type="entry name" value="Urease_gamma"/>
    <property type="match status" value="1"/>
</dbReference>
<dbReference type="Gene3D" id="3.30.280.10">
    <property type="entry name" value="Urease, gamma-like subunit"/>
    <property type="match status" value="1"/>
</dbReference>
<dbReference type="HAMAP" id="MF_00739">
    <property type="entry name" value="Urease_gamma"/>
    <property type="match status" value="1"/>
</dbReference>
<dbReference type="InterPro" id="IPR012010">
    <property type="entry name" value="Urease_gamma"/>
</dbReference>
<dbReference type="InterPro" id="IPR002026">
    <property type="entry name" value="Urease_gamma/gamma-beta_su"/>
</dbReference>
<dbReference type="InterPro" id="IPR036463">
    <property type="entry name" value="Urease_gamma_sf"/>
</dbReference>
<dbReference type="InterPro" id="IPR050069">
    <property type="entry name" value="Urease_subunit"/>
</dbReference>
<dbReference type="NCBIfam" id="NF009712">
    <property type="entry name" value="PRK13241.1"/>
    <property type="match status" value="1"/>
</dbReference>
<dbReference type="NCBIfam" id="TIGR00193">
    <property type="entry name" value="urease_gam"/>
    <property type="match status" value="1"/>
</dbReference>
<dbReference type="PANTHER" id="PTHR33569">
    <property type="entry name" value="UREASE"/>
    <property type="match status" value="1"/>
</dbReference>
<dbReference type="PANTHER" id="PTHR33569:SF1">
    <property type="entry name" value="UREASE"/>
    <property type="match status" value="1"/>
</dbReference>
<dbReference type="Pfam" id="PF00547">
    <property type="entry name" value="Urease_gamma"/>
    <property type="match status" value="1"/>
</dbReference>
<dbReference type="PIRSF" id="PIRSF001223">
    <property type="entry name" value="Urease_gamma"/>
    <property type="match status" value="1"/>
</dbReference>
<dbReference type="SUPFAM" id="SSF54111">
    <property type="entry name" value="Urease, gamma-subunit"/>
    <property type="match status" value="1"/>
</dbReference>
<keyword id="KW-0963">Cytoplasm</keyword>
<keyword id="KW-0378">Hydrolase</keyword>
<protein>
    <recommendedName>
        <fullName evidence="1">Urease subunit gamma</fullName>
        <ecNumber evidence="1">3.5.1.5</ecNumber>
    </recommendedName>
    <alternativeName>
        <fullName evidence="1">Urea amidohydrolase subunit gamma</fullName>
    </alternativeName>
</protein>
<accession>Q6UR35</accession>
<feature type="chain" id="PRO_0000098068" description="Urease subunit gamma">
    <location>
        <begin position="1"/>
        <end position="100"/>
    </location>
</feature>
<comment type="catalytic activity">
    <reaction evidence="1">
        <text>urea + 2 H2O + H(+) = hydrogencarbonate + 2 NH4(+)</text>
        <dbReference type="Rhea" id="RHEA:20557"/>
        <dbReference type="ChEBI" id="CHEBI:15377"/>
        <dbReference type="ChEBI" id="CHEBI:15378"/>
        <dbReference type="ChEBI" id="CHEBI:16199"/>
        <dbReference type="ChEBI" id="CHEBI:17544"/>
        <dbReference type="ChEBI" id="CHEBI:28938"/>
        <dbReference type="EC" id="3.5.1.5"/>
    </reaction>
</comment>
<comment type="pathway">
    <text evidence="1">Nitrogen metabolism; urea degradation; CO(2) and NH(3) from urea (urease route): step 1/1.</text>
</comment>
<comment type="subunit">
    <text evidence="1">Heterotrimer of UreA (gamma), UreB (beta) and UreC (alpha) subunits. Three heterotrimers associate to form the active enzyme.</text>
</comment>
<comment type="subcellular location">
    <subcellularLocation>
        <location evidence="1">Cytoplasm</location>
    </subcellularLocation>
</comment>
<comment type="similarity">
    <text evidence="1">Belongs to the urease gamma subunit family.</text>
</comment>
<gene>
    <name evidence="1" type="primary">ureA</name>
</gene>
<evidence type="ECO:0000255" key="1">
    <source>
        <dbReference type="HAMAP-Rule" id="MF_00739"/>
    </source>
</evidence>
<proteinExistence type="inferred from homology"/>
<reference key="1">
    <citation type="submission" date="2003-08" db="EMBL/GenBank/DDBJ databases">
        <title>Yersinia rohdei urease gene locus (ureABCEFGD), and urea transporter gene (yut) and nickel transporter gene (ureH).</title>
        <authorList>
            <person name="Sebbane F."/>
            <person name="Lemaitre N."/>
            <person name="Simonet M."/>
        </authorList>
    </citation>
    <scope>NUCLEOTIDE SEQUENCE [GENOMIC DNA]</scope>
</reference>
<organism>
    <name type="scientific">Yersinia rohdei</name>
    <dbReference type="NCBI Taxonomy" id="29485"/>
    <lineage>
        <taxon>Bacteria</taxon>
        <taxon>Pseudomonadati</taxon>
        <taxon>Pseudomonadota</taxon>
        <taxon>Gammaproteobacteria</taxon>
        <taxon>Enterobacterales</taxon>
        <taxon>Yersiniaceae</taxon>
        <taxon>Yersinia</taxon>
    </lineage>
</organism>
<sequence length="100" mass="11059">MQLTPREVEKLMIYTLSDVAFKRKARGLKLNYPEAVSIITVTALEGARDGKSLEDVMKEASKVLTKDDVMEGVADLIPNVQVEAIFTDGSRLVTVHDPIK</sequence>
<name>URE3_YERRO</name>